<organism>
    <name type="scientific">Coxiella burnetii (strain CbuK_Q154)</name>
    <name type="common">Coxiella burnetii (strain Q154)</name>
    <dbReference type="NCBI Taxonomy" id="434924"/>
    <lineage>
        <taxon>Bacteria</taxon>
        <taxon>Pseudomonadati</taxon>
        <taxon>Pseudomonadota</taxon>
        <taxon>Gammaproteobacteria</taxon>
        <taxon>Legionellales</taxon>
        <taxon>Coxiellaceae</taxon>
        <taxon>Coxiella</taxon>
    </lineage>
</organism>
<protein>
    <recommendedName>
        <fullName evidence="1">Peptidyl-tRNA hydrolase</fullName>
        <shortName evidence="1">Pth</shortName>
        <ecNumber evidence="1">3.1.1.29</ecNumber>
    </recommendedName>
</protein>
<name>PTH_COXB1</name>
<gene>
    <name evidence="1" type="primary">pth</name>
    <name type="ordered locus">CbuK_0137</name>
</gene>
<evidence type="ECO:0000255" key="1">
    <source>
        <dbReference type="HAMAP-Rule" id="MF_00083"/>
    </source>
</evidence>
<proteinExistence type="inferred from homology"/>
<dbReference type="EC" id="3.1.1.29" evidence="1"/>
<dbReference type="EMBL" id="CP001020">
    <property type="protein sequence ID" value="ACJ19456.1"/>
    <property type="molecule type" value="Genomic_DNA"/>
</dbReference>
<dbReference type="RefSeq" id="WP_005770211.1">
    <property type="nucleotide sequence ID" value="NC_011528.1"/>
</dbReference>
<dbReference type="SMR" id="B6J9D9"/>
<dbReference type="KEGG" id="cbc:CbuK_0137"/>
<dbReference type="HOGENOM" id="CLU_062456_3_1_6"/>
<dbReference type="GO" id="GO:0005737">
    <property type="term" value="C:cytoplasm"/>
    <property type="evidence" value="ECO:0007669"/>
    <property type="project" value="UniProtKB-SubCell"/>
</dbReference>
<dbReference type="GO" id="GO:0004045">
    <property type="term" value="F:peptidyl-tRNA hydrolase activity"/>
    <property type="evidence" value="ECO:0007669"/>
    <property type="project" value="UniProtKB-UniRule"/>
</dbReference>
<dbReference type="GO" id="GO:0000049">
    <property type="term" value="F:tRNA binding"/>
    <property type="evidence" value="ECO:0007669"/>
    <property type="project" value="UniProtKB-UniRule"/>
</dbReference>
<dbReference type="GO" id="GO:0006515">
    <property type="term" value="P:protein quality control for misfolded or incompletely synthesized proteins"/>
    <property type="evidence" value="ECO:0007669"/>
    <property type="project" value="UniProtKB-UniRule"/>
</dbReference>
<dbReference type="GO" id="GO:0072344">
    <property type="term" value="P:rescue of stalled ribosome"/>
    <property type="evidence" value="ECO:0007669"/>
    <property type="project" value="UniProtKB-UniRule"/>
</dbReference>
<dbReference type="CDD" id="cd00462">
    <property type="entry name" value="PTH"/>
    <property type="match status" value="1"/>
</dbReference>
<dbReference type="FunFam" id="3.40.50.1470:FF:000001">
    <property type="entry name" value="Peptidyl-tRNA hydrolase"/>
    <property type="match status" value="1"/>
</dbReference>
<dbReference type="Gene3D" id="3.40.50.1470">
    <property type="entry name" value="Peptidyl-tRNA hydrolase"/>
    <property type="match status" value="1"/>
</dbReference>
<dbReference type="HAMAP" id="MF_00083">
    <property type="entry name" value="Pept_tRNA_hydro_bact"/>
    <property type="match status" value="1"/>
</dbReference>
<dbReference type="InterPro" id="IPR001328">
    <property type="entry name" value="Pept_tRNA_hydro"/>
</dbReference>
<dbReference type="InterPro" id="IPR018171">
    <property type="entry name" value="Pept_tRNA_hydro_CS"/>
</dbReference>
<dbReference type="InterPro" id="IPR036416">
    <property type="entry name" value="Pept_tRNA_hydro_sf"/>
</dbReference>
<dbReference type="NCBIfam" id="TIGR00447">
    <property type="entry name" value="pth"/>
    <property type="match status" value="1"/>
</dbReference>
<dbReference type="PANTHER" id="PTHR17224">
    <property type="entry name" value="PEPTIDYL-TRNA HYDROLASE"/>
    <property type="match status" value="1"/>
</dbReference>
<dbReference type="PANTHER" id="PTHR17224:SF1">
    <property type="entry name" value="PEPTIDYL-TRNA HYDROLASE"/>
    <property type="match status" value="1"/>
</dbReference>
<dbReference type="Pfam" id="PF01195">
    <property type="entry name" value="Pept_tRNA_hydro"/>
    <property type="match status" value="1"/>
</dbReference>
<dbReference type="SUPFAM" id="SSF53178">
    <property type="entry name" value="Peptidyl-tRNA hydrolase-like"/>
    <property type="match status" value="1"/>
</dbReference>
<dbReference type="PROSITE" id="PS01195">
    <property type="entry name" value="PEPT_TRNA_HYDROL_1"/>
    <property type="match status" value="1"/>
</dbReference>
<dbReference type="PROSITE" id="PS01196">
    <property type="entry name" value="PEPT_TRNA_HYDROL_2"/>
    <property type="match status" value="1"/>
</dbReference>
<sequence length="187" mass="20816">MSGGVKLIAGLGNPGDQYARTRHNVGAWFLETLAQQRNQSLAKENKFHGFVAKCNDYWLLKPTTFMNESGQAVAALARFYKIKPSEILIAHDELDFPAGDIRLKEGGGHGGHNGLRNIIQHLGSSDFYRLRIGINHPGYKDRVTPYVLSPPSENDRIAILAAIEKGLRLIPELVQGDFQKVMRELHS</sequence>
<keyword id="KW-0963">Cytoplasm</keyword>
<keyword id="KW-0378">Hydrolase</keyword>
<keyword id="KW-0694">RNA-binding</keyword>
<keyword id="KW-0820">tRNA-binding</keyword>
<feature type="chain" id="PRO_1000092932" description="Peptidyl-tRNA hydrolase">
    <location>
        <begin position="1"/>
        <end position="187"/>
    </location>
</feature>
<feature type="active site" description="Proton acceptor" evidence="1">
    <location>
        <position position="23"/>
    </location>
</feature>
<feature type="binding site" evidence="1">
    <location>
        <position position="18"/>
    </location>
    <ligand>
        <name>tRNA</name>
        <dbReference type="ChEBI" id="CHEBI:17843"/>
    </ligand>
</feature>
<feature type="binding site" evidence="1">
    <location>
        <position position="65"/>
    </location>
    <ligand>
        <name>tRNA</name>
        <dbReference type="ChEBI" id="CHEBI:17843"/>
    </ligand>
</feature>
<feature type="binding site" evidence="1">
    <location>
        <position position="67"/>
    </location>
    <ligand>
        <name>tRNA</name>
        <dbReference type="ChEBI" id="CHEBI:17843"/>
    </ligand>
</feature>
<feature type="binding site" evidence="1">
    <location>
        <position position="113"/>
    </location>
    <ligand>
        <name>tRNA</name>
        <dbReference type="ChEBI" id="CHEBI:17843"/>
    </ligand>
</feature>
<feature type="site" description="Discriminates between blocked and unblocked aminoacyl-tRNA" evidence="1">
    <location>
        <position position="13"/>
    </location>
</feature>
<feature type="site" description="Stabilizes the basic form of H active site to accept a proton" evidence="1">
    <location>
        <position position="92"/>
    </location>
</feature>
<reference key="1">
    <citation type="journal article" date="2009" name="Infect. Immun.">
        <title>Comparative genomics reveal extensive transposon-mediated genomic plasticity and diversity among potential effector proteins within the genus Coxiella.</title>
        <authorList>
            <person name="Beare P.A."/>
            <person name="Unsworth N."/>
            <person name="Andoh M."/>
            <person name="Voth D.E."/>
            <person name="Omsland A."/>
            <person name="Gilk S.D."/>
            <person name="Williams K.P."/>
            <person name="Sobral B.W."/>
            <person name="Kupko J.J. III"/>
            <person name="Porcella S.F."/>
            <person name="Samuel J.E."/>
            <person name="Heinzen R.A."/>
        </authorList>
    </citation>
    <scope>NUCLEOTIDE SEQUENCE [LARGE SCALE GENOMIC DNA]</scope>
    <source>
        <strain>CbuK_Q154</strain>
    </source>
</reference>
<accession>B6J9D9</accession>
<comment type="function">
    <text evidence="1">Hydrolyzes ribosome-free peptidyl-tRNAs (with 1 or more amino acids incorporated), which drop off the ribosome during protein synthesis, or as a result of ribosome stalling.</text>
</comment>
<comment type="function">
    <text evidence="1">Catalyzes the release of premature peptidyl moieties from peptidyl-tRNA molecules trapped in stalled 50S ribosomal subunits, and thus maintains levels of free tRNAs and 50S ribosomes.</text>
</comment>
<comment type="catalytic activity">
    <reaction evidence="1">
        <text>an N-acyl-L-alpha-aminoacyl-tRNA + H2O = an N-acyl-L-amino acid + a tRNA + H(+)</text>
        <dbReference type="Rhea" id="RHEA:54448"/>
        <dbReference type="Rhea" id="RHEA-COMP:10123"/>
        <dbReference type="Rhea" id="RHEA-COMP:13883"/>
        <dbReference type="ChEBI" id="CHEBI:15377"/>
        <dbReference type="ChEBI" id="CHEBI:15378"/>
        <dbReference type="ChEBI" id="CHEBI:59874"/>
        <dbReference type="ChEBI" id="CHEBI:78442"/>
        <dbReference type="ChEBI" id="CHEBI:138191"/>
        <dbReference type="EC" id="3.1.1.29"/>
    </reaction>
</comment>
<comment type="subunit">
    <text evidence="1">Monomer.</text>
</comment>
<comment type="subcellular location">
    <subcellularLocation>
        <location evidence="1">Cytoplasm</location>
    </subcellularLocation>
</comment>
<comment type="similarity">
    <text evidence="1">Belongs to the PTH family.</text>
</comment>